<organism>
    <name type="scientific">Arabidopsis thaliana</name>
    <name type="common">Mouse-ear cress</name>
    <dbReference type="NCBI Taxonomy" id="3702"/>
    <lineage>
        <taxon>Eukaryota</taxon>
        <taxon>Viridiplantae</taxon>
        <taxon>Streptophyta</taxon>
        <taxon>Embryophyta</taxon>
        <taxon>Tracheophyta</taxon>
        <taxon>Spermatophyta</taxon>
        <taxon>Magnoliopsida</taxon>
        <taxon>eudicotyledons</taxon>
        <taxon>Gunneridae</taxon>
        <taxon>Pentapetalae</taxon>
        <taxon>rosids</taxon>
        <taxon>malvids</taxon>
        <taxon>Brassicales</taxon>
        <taxon>Brassicaceae</taxon>
        <taxon>Camelineae</taxon>
        <taxon>Arabidopsis</taxon>
    </lineage>
</organism>
<protein>
    <recommendedName>
        <fullName>Protein NRT1/ PTR FAMILY 2.1</fullName>
        <shortName>AtNPF2.1</shortName>
    </recommendedName>
    <alternativeName>
        <fullName>Protein NAXT1-like 6</fullName>
    </alternativeName>
    <alternativeName>
        <fullName>Putative nitrate excretion transporter 7</fullName>
    </alternativeName>
</protein>
<sequence>MAGLVLSNDTEAKISGDCKRGGCITFPFMIATLLGISVTSYGWVLNLIVFLIEEYNIKSIAAAQISNIVNGCLSMLPVVTAILADSFFGNIPVISASAFISLLGIFLLTLISSFENLRPRPCETGSILCQSPSKLHLGVLYAALALVTAGTSGTRVALASAGANQYDKPRDKGSFFNWYFLTVNTGAIISATAIVYTQENASWRLGFGLCAAANLISFIVFISGKRFYKHDKPMGSPFTSLIRVLVAAILKIKVVTSSKEEDYHREVEKESKTCIGMPSKSFRFLNRAALKSEKDLNQEDGLCHNPWRLCSVEEVEDFKSVLRVLPLWLAILFVGTSIGVQASMTVLQALVTDRGLDSKFKVPAGSLQVIVLISSCVFLVLNNWTIYPIYQKITHKQLTPLQQVGIGQVFNILSMAISAIVEAKRLKTVENEHPMSVLWLLPPLVIVGIGDAFHYMANVAVFYGEFPESMRNTATSVTSVAFGISFYLSTALINLIQRTTAWLPDDINHGRVDNVYWVLVIGGVLNLGYFFVCSWYFTYRKIQDDNRQDPKDVTN</sequence>
<feature type="chain" id="PRO_0000399977" description="Protein NRT1/ PTR FAMILY 2.1">
    <location>
        <begin position="1"/>
        <end position="555"/>
    </location>
</feature>
<feature type="transmembrane region" description="Helical" evidence="2">
    <location>
        <begin position="32"/>
        <end position="52"/>
    </location>
</feature>
<feature type="transmembrane region" description="Helical" evidence="2">
    <location>
        <begin position="68"/>
        <end position="88"/>
    </location>
</feature>
<feature type="transmembrane region" description="Helical" evidence="2">
    <location>
        <begin position="91"/>
        <end position="111"/>
    </location>
</feature>
<feature type="transmembrane region" description="Helical" evidence="2">
    <location>
        <begin position="127"/>
        <end position="147"/>
    </location>
</feature>
<feature type="transmembrane region" description="Helical" evidence="2">
    <location>
        <begin position="175"/>
        <end position="195"/>
    </location>
</feature>
<feature type="transmembrane region" description="Helical" evidence="2">
    <location>
        <begin position="205"/>
        <end position="225"/>
    </location>
</feature>
<feature type="transmembrane region" description="Helical" evidence="2">
    <location>
        <begin position="324"/>
        <end position="344"/>
    </location>
</feature>
<feature type="transmembrane region" description="Helical" evidence="2">
    <location>
        <begin position="369"/>
        <end position="389"/>
    </location>
</feature>
<feature type="transmembrane region" description="Helical" evidence="2">
    <location>
        <begin position="401"/>
        <end position="421"/>
    </location>
</feature>
<feature type="transmembrane region" description="Helical" evidence="2">
    <location>
        <begin position="437"/>
        <end position="457"/>
    </location>
</feature>
<feature type="transmembrane region" description="Helical" evidence="2">
    <location>
        <begin position="476"/>
        <end position="496"/>
    </location>
</feature>
<feature type="transmembrane region" description="Helical" evidence="2">
    <location>
        <begin position="517"/>
        <end position="537"/>
    </location>
</feature>
<dbReference type="EMBL" id="AL157735">
    <property type="protein sequence ID" value="CAB75785.1"/>
    <property type="molecule type" value="Genomic_DNA"/>
</dbReference>
<dbReference type="EMBL" id="CP002686">
    <property type="protein sequence ID" value="AEE78063.1"/>
    <property type="molecule type" value="Genomic_DNA"/>
</dbReference>
<dbReference type="PIR" id="T47512">
    <property type="entry name" value="T47512"/>
</dbReference>
<dbReference type="RefSeq" id="NP_190158.1">
    <property type="nucleotide sequence ID" value="NM_114441.1"/>
</dbReference>
<dbReference type="SMR" id="Q9M171"/>
<dbReference type="FunCoup" id="Q9M171">
    <property type="interactions" value="1"/>
</dbReference>
<dbReference type="STRING" id="3702.Q9M171"/>
<dbReference type="PaxDb" id="3702-AT3G45720.1"/>
<dbReference type="ProteomicsDB" id="226441"/>
<dbReference type="EnsemblPlants" id="AT3G45720.1">
    <property type="protein sequence ID" value="AT3G45720.1"/>
    <property type="gene ID" value="AT3G45720"/>
</dbReference>
<dbReference type="GeneID" id="823714"/>
<dbReference type="Gramene" id="AT3G45720.1">
    <property type="protein sequence ID" value="AT3G45720.1"/>
    <property type="gene ID" value="AT3G45720"/>
</dbReference>
<dbReference type="KEGG" id="ath:AT3G45720"/>
<dbReference type="Araport" id="AT3G45720"/>
<dbReference type="TAIR" id="AT3G45720"/>
<dbReference type="eggNOG" id="KOG1237">
    <property type="taxonomic scope" value="Eukaryota"/>
</dbReference>
<dbReference type="HOGENOM" id="CLU_009313_4_2_1"/>
<dbReference type="InParanoid" id="Q9M171"/>
<dbReference type="OMA" id="WMSAVIG"/>
<dbReference type="PhylomeDB" id="Q9M171"/>
<dbReference type="PRO" id="PR:Q9M171"/>
<dbReference type="Proteomes" id="UP000006548">
    <property type="component" value="Chromosome 3"/>
</dbReference>
<dbReference type="ExpressionAtlas" id="Q9M171">
    <property type="expression patterns" value="differential"/>
</dbReference>
<dbReference type="GO" id="GO:0016020">
    <property type="term" value="C:membrane"/>
    <property type="evidence" value="ECO:0007669"/>
    <property type="project" value="UniProtKB-SubCell"/>
</dbReference>
<dbReference type="GO" id="GO:0022857">
    <property type="term" value="F:transmembrane transporter activity"/>
    <property type="evidence" value="ECO:0007669"/>
    <property type="project" value="InterPro"/>
</dbReference>
<dbReference type="GO" id="GO:0042128">
    <property type="term" value="P:nitrate assimilation"/>
    <property type="evidence" value="ECO:0007669"/>
    <property type="project" value="UniProtKB-KW"/>
</dbReference>
<dbReference type="CDD" id="cd17416">
    <property type="entry name" value="MFS_NPF1_2"/>
    <property type="match status" value="1"/>
</dbReference>
<dbReference type="Gene3D" id="1.20.1250.20">
    <property type="entry name" value="MFS general substrate transporter like domains"/>
    <property type="match status" value="1"/>
</dbReference>
<dbReference type="InterPro" id="IPR036259">
    <property type="entry name" value="MFS_trans_sf"/>
</dbReference>
<dbReference type="InterPro" id="IPR000109">
    <property type="entry name" value="POT_fam"/>
</dbReference>
<dbReference type="PANTHER" id="PTHR11654">
    <property type="entry name" value="OLIGOPEPTIDE TRANSPORTER-RELATED"/>
    <property type="match status" value="1"/>
</dbReference>
<dbReference type="Pfam" id="PF00854">
    <property type="entry name" value="PTR2"/>
    <property type="match status" value="1"/>
</dbReference>
<dbReference type="SUPFAM" id="SSF103473">
    <property type="entry name" value="MFS general substrate transporter"/>
    <property type="match status" value="1"/>
</dbReference>
<proteinExistence type="evidence at transcript level"/>
<name>PTR43_ARATH</name>
<comment type="function">
    <text evidence="1">Transporter involved in a passive nitrate efflux.</text>
</comment>
<comment type="subcellular location">
    <subcellularLocation>
        <location evidence="1">Membrane</location>
        <topology evidence="1">Multi-pass membrane protein</topology>
    </subcellularLocation>
</comment>
<comment type="tissue specificity">
    <text evidence="3">Expressed in roots.</text>
</comment>
<comment type="similarity">
    <text evidence="4">Belongs to the major facilitator superfamily. Proton-dependent oligopeptide transporter (POT/PTR) (TC 2.A.17) family.</text>
</comment>
<keyword id="KW-0472">Membrane</keyword>
<keyword id="KW-0534">Nitrate assimilation</keyword>
<keyword id="KW-1185">Reference proteome</keyword>
<keyword id="KW-0812">Transmembrane</keyword>
<keyword id="KW-1133">Transmembrane helix</keyword>
<keyword id="KW-0813">Transport</keyword>
<accession>Q9M171</accession>
<evidence type="ECO:0000250" key="1"/>
<evidence type="ECO:0000255" key="2"/>
<evidence type="ECO:0000269" key="3">
    <source>
    </source>
</evidence>
<evidence type="ECO:0000305" key="4"/>
<gene>
    <name type="primary">NPF2.1</name>
    <name type="ordered locus">At3g45720</name>
    <name type="ORF">T6D9.50</name>
</gene>
<reference key="1">
    <citation type="journal article" date="2000" name="Nature">
        <title>Sequence and analysis of chromosome 3 of the plant Arabidopsis thaliana.</title>
        <authorList>
            <person name="Salanoubat M."/>
            <person name="Lemcke K."/>
            <person name="Rieger M."/>
            <person name="Ansorge W."/>
            <person name="Unseld M."/>
            <person name="Fartmann B."/>
            <person name="Valle G."/>
            <person name="Bloecker H."/>
            <person name="Perez-Alonso M."/>
            <person name="Obermaier B."/>
            <person name="Delseny M."/>
            <person name="Boutry M."/>
            <person name="Grivell L.A."/>
            <person name="Mache R."/>
            <person name="Puigdomenech P."/>
            <person name="De Simone V."/>
            <person name="Choisne N."/>
            <person name="Artiguenave F."/>
            <person name="Robert C."/>
            <person name="Brottier P."/>
            <person name="Wincker P."/>
            <person name="Cattolico L."/>
            <person name="Weissenbach J."/>
            <person name="Saurin W."/>
            <person name="Quetier F."/>
            <person name="Schaefer M."/>
            <person name="Mueller-Auer S."/>
            <person name="Gabel C."/>
            <person name="Fuchs M."/>
            <person name="Benes V."/>
            <person name="Wurmbach E."/>
            <person name="Drzonek H."/>
            <person name="Erfle H."/>
            <person name="Jordan N."/>
            <person name="Bangert S."/>
            <person name="Wiedelmann R."/>
            <person name="Kranz H."/>
            <person name="Voss H."/>
            <person name="Holland R."/>
            <person name="Brandt P."/>
            <person name="Nyakatura G."/>
            <person name="Vezzi A."/>
            <person name="D'Angelo M."/>
            <person name="Pallavicini A."/>
            <person name="Toppo S."/>
            <person name="Simionati B."/>
            <person name="Conrad A."/>
            <person name="Hornischer K."/>
            <person name="Kauer G."/>
            <person name="Loehnert T.-H."/>
            <person name="Nordsiek G."/>
            <person name="Reichelt J."/>
            <person name="Scharfe M."/>
            <person name="Schoen O."/>
            <person name="Bargues M."/>
            <person name="Terol J."/>
            <person name="Climent J."/>
            <person name="Navarro P."/>
            <person name="Collado C."/>
            <person name="Perez-Perez A."/>
            <person name="Ottenwaelder B."/>
            <person name="Duchemin D."/>
            <person name="Cooke R."/>
            <person name="Laudie M."/>
            <person name="Berger-Llauro C."/>
            <person name="Purnelle B."/>
            <person name="Masuy D."/>
            <person name="de Haan M."/>
            <person name="Maarse A.C."/>
            <person name="Alcaraz J.-P."/>
            <person name="Cottet A."/>
            <person name="Casacuberta E."/>
            <person name="Monfort A."/>
            <person name="Argiriou A."/>
            <person name="Flores M."/>
            <person name="Liguori R."/>
            <person name="Vitale D."/>
            <person name="Mannhaupt G."/>
            <person name="Haase D."/>
            <person name="Schoof H."/>
            <person name="Rudd S."/>
            <person name="Zaccaria P."/>
            <person name="Mewes H.-W."/>
            <person name="Mayer K.F.X."/>
            <person name="Kaul S."/>
            <person name="Town C.D."/>
            <person name="Koo H.L."/>
            <person name="Tallon L.J."/>
            <person name="Jenkins J."/>
            <person name="Rooney T."/>
            <person name="Rizzo M."/>
            <person name="Walts A."/>
            <person name="Utterback T."/>
            <person name="Fujii C.Y."/>
            <person name="Shea T.P."/>
            <person name="Creasy T.H."/>
            <person name="Haas B."/>
            <person name="Maiti R."/>
            <person name="Wu D."/>
            <person name="Peterson J."/>
            <person name="Van Aken S."/>
            <person name="Pai G."/>
            <person name="Militscher J."/>
            <person name="Sellers P."/>
            <person name="Gill J.E."/>
            <person name="Feldblyum T.V."/>
            <person name="Preuss D."/>
            <person name="Lin X."/>
            <person name="Nierman W.C."/>
            <person name="Salzberg S.L."/>
            <person name="White O."/>
            <person name="Venter J.C."/>
            <person name="Fraser C.M."/>
            <person name="Kaneko T."/>
            <person name="Nakamura Y."/>
            <person name="Sato S."/>
            <person name="Kato T."/>
            <person name="Asamizu E."/>
            <person name="Sasamoto S."/>
            <person name="Kimura T."/>
            <person name="Idesawa K."/>
            <person name="Kawashima K."/>
            <person name="Kishida Y."/>
            <person name="Kiyokawa C."/>
            <person name="Kohara M."/>
            <person name="Matsumoto M."/>
            <person name="Matsuno A."/>
            <person name="Muraki A."/>
            <person name="Nakayama S."/>
            <person name="Nakazaki N."/>
            <person name="Shinpo S."/>
            <person name="Takeuchi C."/>
            <person name="Wada T."/>
            <person name="Watanabe A."/>
            <person name="Yamada M."/>
            <person name="Yasuda M."/>
            <person name="Tabata S."/>
        </authorList>
    </citation>
    <scope>NUCLEOTIDE SEQUENCE [LARGE SCALE GENOMIC DNA]</scope>
    <source>
        <strain>cv. Columbia</strain>
    </source>
</reference>
<reference key="2">
    <citation type="journal article" date="2017" name="Plant J.">
        <title>Araport11: a complete reannotation of the Arabidopsis thaliana reference genome.</title>
        <authorList>
            <person name="Cheng C.Y."/>
            <person name="Krishnakumar V."/>
            <person name="Chan A.P."/>
            <person name="Thibaud-Nissen F."/>
            <person name="Schobel S."/>
            <person name="Town C.D."/>
        </authorList>
    </citation>
    <scope>GENOME REANNOTATION</scope>
    <source>
        <strain>cv. Columbia</strain>
    </source>
</reference>
<reference key="3">
    <citation type="journal article" date="2007" name="Plant Cell">
        <title>Nitrate efflux at the root plasma membrane: identification of an Arabidopsis excretion transporter.</title>
        <authorList>
            <person name="Segonzac C."/>
            <person name="Boyer J.C."/>
            <person name="Ipotesi E."/>
            <person name="Szponarski W."/>
            <person name="Tillard P."/>
            <person name="Touraine B."/>
            <person name="Sommerer N."/>
            <person name="Rossignol M."/>
            <person name="Gibrat R."/>
        </authorList>
    </citation>
    <scope>IDENTIFICATION</scope>
</reference>
<reference key="4">
    <citation type="journal article" date="2007" name="FEBS Lett.">
        <title>Nitrate transporters and peptide transporters.</title>
        <authorList>
            <person name="Tsay Y.F."/>
            <person name="Chiu C.C."/>
            <person name="Tsai C.B."/>
            <person name="Ho C.H."/>
            <person name="Hsu P.K."/>
        </authorList>
    </citation>
    <scope>TISSUE SPECIFICITY</scope>
    <scope>GENE FAMILY</scope>
</reference>
<reference key="5">
    <citation type="journal article" date="2010" name="Plant Cell">
        <title>The Arabidopsis nitrate transporter NRT1.8 functions in nitrate removal from the xylem sap and mediates cadmium tolerance.</title>
        <authorList>
            <person name="Li J.Y."/>
            <person name="Fu Y.L."/>
            <person name="Pike S.M."/>
            <person name="Bao J."/>
            <person name="Tian W."/>
            <person name="Zhang Y."/>
            <person name="Chen C.Z."/>
            <person name="Zhang Y."/>
            <person name="Li H.M."/>
            <person name="Huang J."/>
            <person name="Li L.G."/>
            <person name="Schroeder J.I."/>
            <person name="Gassmann W."/>
            <person name="Gong J.M."/>
        </authorList>
    </citation>
    <scope>GENE FAMILY</scope>
</reference>
<reference key="6">
    <citation type="journal article" date="2014" name="Trends Plant Sci.">
        <title>A unified nomenclature of NITRATE TRANSPORTER 1/PEPTIDE TRANSPORTER family members in plants.</title>
        <authorList>
            <person name="Leran S."/>
            <person name="Varala K."/>
            <person name="Boyer J.C."/>
            <person name="Chiurazzi M."/>
            <person name="Crawford N."/>
            <person name="Daniel-Vedele F."/>
            <person name="David L."/>
            <person name="Dickstein R."/>
            <person name="Fernandez E."/>
            <person name="Forde B."/>
            <person name="Gassmann W."/>
            <person name="Geiger D."/>
            <person name="Gojon A."/>
            <person name="Gong J.M."/>
            <person name="Halkier B.A."/>
            <person name="Harris J.M."/>
            <person name="Hedrich R."/>
            <person name="Limami A.M."/>
            <person name="Rentsch D."/>
            <person name="Seo M."/>
            <person name="Tsay Y.F."/>
            <person name="Zhang M."/>
            <person name="Coruzzi G."/>
            <person name="Lacombe B."/>
        </authorList>
    </citation>
    <scope>GENE FAMILY</scope>
    <scope>NOMENCLATURE</scope>
</reference>